<organism>
    <name type="scientific">Clostridium botulinum (strain Kyoto / Type A2)</name>
    <dbReference type="NCBI Taxonomy" id="536232"/>
    <lineage>
        <taxon>Bacteria</taxon>
        <taxon>Bacillati</taxon>
        <taxon>Bacillota</taxon>
        <taxon>Clostridia</taxon>
        <taxon>Eubacteriales</taxon>
        <taxon>Clostridiaceae</taxon>
        <taxon>Clostridium</taxon>
    </lineage>
</organism>
<feature type="chain" id="PRO_1000215556" description="Proline--tRNA ligase">
    <location>
        <begin position="1"/>
        <end position="478"/>
    </location>
</feature>
<accession>C1FM10</accession>
<dbReference type="EC" id="6.1.1.15" evidence="1"/>
<dbReference type="EMBL" id="CP001581">
    <property type="protein sequence ID" value="ACO84597.1"/>
    <property type="molecule type" value="Genomic_DNA"/>
</dbReference>
<dbReference type="RefSeq" id="WP_003357685.1">
    <property type="nucleotide sequence ID" value="NC_012563.1"/>
</dbReference>
<dbReference type="SMR" id="C1FM10"/>
<dbReference type="KEGG" id="cby:CLM_3789"/>
<dbReference type="eggNOG" id="COG0441">
    <property type="taxonomic scope" value="Bacteria"/>
</dbReference>
<dbReference type="HOGENOM" id="CLU_001882_4_2_9"/>
<dbReference type="Proteomes" id="UP000001374">
    <property type="component" value="Chromosome"/>
</dbReference>
<dbReference type="GO" id="GO:0017101">
    <property type="term" value="C:aminoacyl-tRNA synthetase multienzyme complex"/>
    <property type="evidence" value="ECO:0007669"/>
    <property type="project" value="TreeGrafter"/>
</dbReference>
<dbReference type="GO" id="GO:0005737">
    <property type="term" value="C:cytoplasm"/>
    <property type="evidence" value="ECO:0007669"/>
    <property type="project" value="UniProtKB-SubCell"/>
</dbReference>
<dbReference type="GO" id="GO:0005524">
    <property type="term" value="F:ATP binding"/>
    <property type="evidence" value="ECO:0007669"/>
    <property type="project" value="UniProtKB-UniRule"/>
</dbReference>
<dbReference type="GO" id="GO:0140096">
    <property type="term" value="F:catalytic activity, acting on a protein"/>
    <property type="evidence" value="ECO:0007669"/>
    <property type="project" value="UniProtKB-ARBA"/>
</dbReference>
<dbReference type="GO" id="GO:0004827">
    <property type="term" value="F:proline-tRNA ligase activity"/>
    <property type="evidence" value="ECO:0007669"/>
    <property type="project" value="UniProtKB-UniRule"/>
</dbReference>
<dbReference type="GO" id="GO:0016740">
    <property type="term" value="F:transferase activity"/>
    <property type="evidence" value="ECO:0007669"/>
    <property type="project" value="UniProtKB-ARBA"/>
</dbReference>
<dbReference type="GO" id="GO:0006433">
    <property type="term" value="P:prolyl-tRNA aminoacylation"/>
    <property type="evidence" value="ECO:0007669"/>
    <property type="project" value="UniProtKB-UniRule"/>
</dbReference>
<dbReference type="CDD" id="cd00862">
    <property type="entry name" value="ProRS_anticodon_zinc"/>
    <property type="match status" value="1"/>
</dbReference>
<dbReference type="CDD" id="cd00778">
    <property type="entry name" value="ProRS_core_arch_euk"/>
    <property type="match status" value="1"/>
</dbReference>
<dbReference type="FunFam" id="3.40.50.800:FF:000005">
    <property type="entry name" value="bifunctional glutamate/proline--tRNA ligase"/>
    <property type="match status" value="1"/>
</dbReference>
<dbReference type="FunFam" id="3.30.110.30:FF:000005">
    <property type="entry name" value="Proline--tRNA ligase"/>
    <property type="match status" value="1"/>
</dbReference>
<dbReference type="FunFam" id="3.30.930.10:FF:000023">
    <property type="entry name" value="Proline--tRNA ligase"/>
    <property type="match status" value="1"/>
</dbReference>
<dbReference type="Gene3D" id="3.40.50.800">
    <property type="entry name" value="Anticodon-binding domain"/>
    <property type="match status" value="1"/>
</dbReference>
<dbReference type="Gene3D" id="3.30.930.10">
    <property type="entry name" value="Bira Bifunctional Protein, Domain 2"/>
    <property type="match status" value="1"/>
</dbReference>
<dbReference type="Gene3D" id="3.30.110.30">
    <property type="entry name" value="C-terminal domain of ProRS"/>
    <property type="match status" value="1"/>
</dbReference>
<dbReference type="HAMAP" id="MF_01571">
    <property type="entry name" value="Pro_tRNA_synth_type3"/>
    <property type="match status" value="1"/>
</dbReference>
<dbReference type="InterPro" id="IPR002314">
    <property type="entry name" value="aa-tRNA-synt_IIb"/>
</dbReference>
<dbReference type="InterPro" id="IPR006195">
    <property type="entry name" value="aa-tRNA-synth_II"/>
</dbReference>
<dbReference type="InterPro" id="IPR045864">
    <property type="entry name" value="aa-tRNA-synth_II/BPL/LPL"/>
</dbReference>
<dbReference type="InterPro" id="IPR004154">
    <property type="entry name" value="Anticodon-bd"/>
</dbReference>
<dbReference type="InterPro" id="IPR036621">
    <property type="entry name" value="Anticodon-bd_dom_sf"/>
</dbReference>
<dbReference type="InterPro" id="IPR002316">
    <property type="entry name" value="Pro-tRNA-ligase_IIa"/>
</dbReference>
<dbReference type="InterPro" id="IPR004499">
    <property type="entry name" value="Pro-tRNA-ligase_IIa_arc-type"/>
</dbReference>
<dbReference type="InterPro" id="IPR016061">
    <property type="entry name" value="Pro-tRNA_ligase_II_C"/>
</dbReference>
<dbReference type="InterPro" id="IPR017449">
    <property type="entry name" value="Pro-tRNA_synth_II"/>
</dbReference>
<dbReference type="InterPro" id="IPR033721">
    <property type="entry name" value="ProRS_core_arch_euk"/>
</dbReference>
<dbReference type="NCBIfam" id="TIGR00408">
    <property type="entry name" value="proS_fam_I"/>
    <property type="match status" value="1"/>
</dbReference>
<dbReference type="PANTHER" id="PTHR43382:SF2">
    <property type="entry name" value="BIFUNCTIONAL GLUTAMATE_PROLINE--TRNA LIGASE"/>
    <property type="match status" value="1"/>
</dbReference>
<dbReference type="PANTHER" id="PTHR43382">
    <property type="entry name" value="PROLYL-TRNA SYNTHETASE"/>
    <property type="match status" value="1"/>
</dbReference>
<dbReference type="Pfam" id="PF03129">
    <property type="entry name" value="HGTP_anticodon"/>
    <property type="match status" value="1"/>
</dbReference>
<dbReference type="Pfam" id="PF09180">
    <property type="entry name" value="ProRS-C_1"/>
    <property type="match status" value="1"/>
</dbReference>
<dbReference type="Pfam" id="PF00587">
    <property type="entry name" value="tRNA-synt_2b"/>
    <property type="match status" value="1"/>
</dbReference>
<dbReference type="PRINTS" id="PR01046">
    <property type="entry name" value="TRNASYNTHPRO"/>
</dbReference>
<dbReference type="SMART" id="SM00946">
    <property type="entry name" value="ProRS-C_1"/>
    <property type="match status" value="1"/>
</dbReference>
<dbReference type="SUPFAM" id="SSF64586">
    <property type="entry name" value="C-terminal domain of ProRS"/>
    <property type="match status" value="1"/>
</dbReference>
<dbReference type="SUPFAM" id="SSF52954">
    <property type="entry name" value="Class II aaRS ABD-related"/>
    <property type="match status" value="1"/>
</dbReference>
<dbReference type="SUPFAM" id="SSF55681">
    <property type="entry name" value="Class II aaRS and biotin synthetases"/>
    <property type="match status" value="1"/>
</dbReference>
<dbReference type="PROSITE" id="PS50862">
    <property type="entry name" value="AA_TRNA_LIGASE_II"/>
    <property type="match status" value="1"/>
</dbReference>
<protein>
    <recommendedName>
        <fullName evidence="1">Proline--tRNA ligase</fullName>
        <ecNumber evidence="1">6.1.1.15</ecNumber>
    </recommendedName>
    <alternativeName>
        <fullName evidence="1">Prolyl-tRNA synthetase</fullName>
        <shortName evidence="1">ProRS</shortName>
    </alternativeName>
</protein>
<gene>
    <name evidence="1" type="primary">proS</name>
    <name type="ordered locus">CLM_3789</name>
</gene>
<reference key="1">
    <citation type="submission" date="2008-10" db="EMBL/GenBank/DDBJ databases">
        <title>Genome sequence of Clostridium botulinum A2 Kyoto.</title>
        <authorList>
            <person name="Shrivastava S."/>
            <person name="Brinkac L.M."/>
            <person name="Brown J.L."/>
            <person name="Bruce D."/>
            <person name="Detter C.C."/>
            <person name="Johnson E.A."/>
            <person name="Munk C.A."/>
            <person name="Smith L.A."/>
            <person name="Smith T.J."/>
            <person name="Sutton G."/>
            <person name="Brettin T.S."/>
        </authorList>
    </citation>
    <scope>NUCLEOTIDE SEQUENCE [LARGE SCALE GENOMIC DNA]</scope>
    <source>
        <strain>Kyoto / Type A2</strain>
    </source>
</reference>
<sequence length="478" mass="54935">MAGDKKFVEDITPMDEDFAQWYTDIVKKAELADYSSIRGCMIIRPNGYAIWENIQKYVDTKLKEYGHENVSMPIFIPENLLQKEKDHVEGFAPEVAWVTHGGDDELAERLCVRPTSETLFCEHYAKIVQSYKDLPKLYNQWCSVVRWEKTTRPFLRTTEFLWQEGHTIHETKEEAESHSLKILNMYSRLCEDMLAMPVVMGKKTDKEKFAGADDTYTIESLMHDGKALQAGTSHYLGQNFSKAFAIQFSDRNGKLDYPHYTTWAVTTRLIGAIIMVHGDNSGLKLPPRIAPTQAVIIPVAQHKEGVLEKAKELKEKLAKVVRVKLDDSDKMPGWKYSEYEMKGIPLRIEIGPKDIEKNQAVLVRRDNREKTIVSLDEIEIKVQEMLDIIHNSMLEEAKKTRDEKTYVATNMEEFEDTIENKPGFIKAMWCGDRACEDKIREVTGATSRCMPFEQEVVSDTCVCCGKKAKNLVYWGRAY</sequence>
<name>SYP_CLOBJ</name>
<evidence type="ECO:0000255" key="1">
    <source>
        <dbReference type="HAMAP-Rule" id="MF_01571"/>
    </source>
</evidence>
<keyword id="KW-0030">Aminoacyl-tRNA synthetase</keyword>
<keyword id="KW-0067">ATP-binding</keyword>
<keyword id="KW-0963">Cytoplasm</keyword>
<keyword id="KW-0436">Ligase</keyword>
<keyword id="KW-0547">Nucleotide-binding</keyword>
<keyword id="KW-0648">Protein biosynthesis</keyword>
<proteinExistence type="inferred from homology"/>
<comment type="function">
    <text evidence="1">Catalyzes the attachment of proline to tRNA(Pro) in a two-step reaction: proline is first activated by ATP to form Pro-AMP and then transferred to the acceptor end of tRNA(Pro).</text>
</comment>
<comment type="catalytic activity">
    <reaction evidence="1">
        <text>tRNA(Pro) + L-proline + ATP = L-prolyl-tRNA(Pro) + AMP + diphosphate</text>
        <dbReference type="Rhea" id="RHEA:14305"/>
        <dbReference type="Rhea" id="RHEA-COMP:9700"/>
        <dbReference type="Rhea" id="RHEA-COMP:9702"/>
        <dbReference type="ChEBI" id="CHEBI:30616"/>
        <dbReference type="ChEBI" id="CHEBI:33019"/>
        <dbReference type="ChEBI" id="CHEBI:60039"/>
        <dbReference type="ChEBI" id="CHEBI:78442"/>
        <dbReference type="ChEBI" id="CHEBI:78532"/>
        <dbReference type="ChEBI" id="CHEBI:456215"/>
        <dbReference type="EC" id="6.1.1.15"/>
    </reaction>
</comment>
<comment type="subunit">
    <text evidence="1">Homodimer.</text>
</comment>
<comment type="subcellular location">
    <subcellularLocation>
        <location evidence="1">Cytoplasm</location>
    </subcellularLocation>
</comment>
<comment type="domain">
    <text evidence="1">Consists of three domains: the N-terminal catalytic domain, the anticodon-binding domain and the C-terminal extension.</text>
</comment>
<comment type="similarity">
    <text evidence="1">Belongs to the class-II aminoacyl-tRNA synthetase family. ProS type 3 subfamily.</text>
</comment>